<feature type="signal peptide" evidence="2">
    <location>
        <begin position="1"/>
        <end position="20"/>
    </location>
</feature>
<feature type="chain" id="PRO_0000031666" description="Protein canopy homolog 2">
    <location>
        <begin position="21"/>
        <end position="182"/>
    </location>
</feature>
<feature type="domain" description="Saposin B-type" evidence="3">
    <location>
        <begin position="24"/>
        <end position="175"/>
    </location>
</feature>
<feature type="short sequence motif" description="Prevents secretion from ER" evidence="4">
    <location>
        <begin position="179"/>
        <end position="182"/>
    </location>
</feature>
<feature type="modified residue" description="Phosphoserine" evidence="1">
    <location>
        <position position="115"/>
    </location>
</feature>
<feature type="disulfide bond" evidence="3">
    <location>
        <begin position="28"/>
        <end position="171"/>
    </location>
</feature>
<feature type="disulfide bond" evidence="3">
    <location>
        <begin position="31"/>
        <end position="164"/>
    </location>
</feature>
<feature type="disulfide bond" evidence="3">
    <location>
        <begin position="86"/>
        <end position="137"/>
    </location>
</feature>
<feature type="splice variant" id="VSP_010884" description="In isoform 2." evidence="6 7">
    <original>PYARSEAHLTELLEE</original>
    <variation>TVTVPPNKVAHSGFG</variation>
    <location>
        <begin position="70"/>
        <end position="84"/>
    </location>
</feature>
<feature type="splice variant" id="VSP_010885" description="In isoform 2." evidence="6 7">
    <location>
        <begin position="85"/>
        <end position="182"/>
    </location>
</feature>
<proteinExistence type="evidence at protein level"/>
<evidence type="ECO:0000250" key="1">
    <source>
        <dbReference type="UniProtKB" id="Q9QXT0"/>
    </source>
</evidence>
<evidence type="ECO:0000255" key="2"/>
<evidence type="ECO:0000255" key="3">
    <source>
        <dbReference type="PROSITE-ProRule" id="PRU00415"/>
    </source>
</evidence>
<evidence type="ECO:0000255" key="4">
    <source>
        <dbReference type="PROSITE-ProRule" id="PRU10138"/>
    </source>
</evidence>
<evidence type="ECO:0000269" key="5">
    <source>
    </source>
</evidence>
<evidence type="ECO:0000303" key="6">
    <source>
    </source>
</evidence>
<evidence type="ECO:0000303" key="7">
    <source ref="3"/>
</evidence>
<evidence type="ECO:0000305" key="8"/>
<protein>
    <recommendedName>
        <fullName>Protein canopy homolog 2</fullName>
    </recommendedName>
    <alternativeName>
        <fullName>MIR-interacting saposin-like protein</fullName>
    </alternativeName>
    <alternativeName>
        <fullName>Putative secreted protein Zsig9</fullName>
    </alternativeName>
    <alternativeName>
        <fullName>Transmembrane protein 4</fullName>
    </alternativeName>
</protein>
<accession>Q9Y2B0</accession>
<accession>B2R7B9</accession>
<accession>Q9UHE9</accession>
<reference key="1">
    <citation type="journal article" date="1999" name="Gene">
        <title>Selection of cDNAs encoding putative type II membrane proteins on the cell surface from a human full-length cDNA bank.</title>
        <authorList>
            <person name="Yokoyama-Kobayashi M."/>
            <person name="Yamaguchi T."/>
            <person name="Sekine S."/>
            <person name="Kato S."/>
        </authorList>
    </citation>
    <scope>NUCLEOTIDE SEQUENCE [MRNA] (ISOFORM 1)</scope>
    <source>
        <tissue>Gastric adenocarcinoma</tissue>
    </source>
</reference>
<reference key="2">
    <citation type="journal article" date="2003" name="J. Biol. Chem.">
        <title>MSAP is a novel MIR-interacting protein that enhances neurite outgrowth and increases myosin regulatory light chain.</title>
        <authorList>
            <person name="Bornhauser B.C."/>
            <person name="Olsson P.-A."/>
            <person name="Lindholm D."/>
        </authorList>
    </citation>
    <scope>NUCLEOTIDE SEQUENCE [MRNA] (ISOFORM 1)</scope>
    <scope>INTERACTION WITH MYLIP</scope>
    <scope>TISSUE SPECIFICITY</scope>
</reference>
<reference key="3">
    <citation type="submission" date="1999-09" db="EMBL/GenBank/DDBJ databases">
        <title>Homo sapiens putative secreted protein.</title>
        <authorList>
            <person name="Sheppard P."/>
            <person name="Jelinek L."/>
            <person name="Whitmore T."/>
            <person name="Blumberg H."/>
            <person name="Lehner J."/>
            <person name="O'Hara P."/>
        </authorList>
    </citation>
    <scope>NUCLEOTIDE SEQUENCE [MRNA] (ISOFORM 2)</scope>
</reference>
<reference key="4">
    <citation type="journal article" date="2003" name="Genome Res.">
        <title>The secreted protein discovery initiative (SPDI), a large-scale effort to identify novel human secreted and transmembrane proteins: a bioinformatics assessment.</title>
        <authorList>
            <person name="Clark H.F."/>
            <person name="Gurney A.L."/>
            <person name="Abaya E."/>
            <person name="Baker K."/>
            <person name="Baldwin D.T."/>
            <person name="Brush J."/>
            <person name="Chen J."/>
            <person name="Chow B."/>
            <person name="Chui C."/>
            <person name="Crowley C."/>
            <person name="Currell B."/>
            <person name="Deuel B."/>
            <person name="Dowd P."/>
            <person name="Eaton D."/>
            <person name="Foster J.S."/>
            <person name="Grimaldi C."/>
            <person name="Gu Q."/>
            <person name="Hass P.E."/>
            <person name="Heldens S."/>
            <person name="Huang A."/>
            <person name="Kim H.S."/>
            <person name="Klimowski L."/>
            <person name="Jin Y."/>
            <person name="Johnson S."/>
            <person name="Lee J."/>
            <person name="Lewis L."/>
            <person name="Liao D."/>
            <person name="Mark M.R."/>
            <person name="Robbie E."/>
            <person name="Sanchez C."/>
            <person name="Schoenfeld J."/>
            <person name="Seshagiri S."/>
            <person name="Simmons L."/>
            <person name="Singh J."/>
            <person name="Smith V."/>
            <person name="Stinson J."/>
            <person name="Vagts A."/>
            <person name="Vandlen R.L."/>
            <person name="Watanabe C."/>
            <person name="Wieand D."/>
            <person name="Woods K."/>
            <person name="Xie M.-H."/>
            <person name="Yansura D.G."/>
            <person name="Yi S."/>
            <person name="Yu G."/>
            <person name="Yuan J."/>
            <person name="Zhang M."/>
            <person name="Zhang Z."/>
            <person name="Goddard A.D."/>
            <person name="Wood W.I."/>
            <person name="Godowski P.J."/>
            <person name="Gray A.M."/>
        </authorList>
    </citation>
    <scope>NUCLEOTIDE SEQUENCE [LARGE SCALE MRNA] (ISOFORM 1)</scope>
</reference>
<reference key="5">
    <citation type="journal article" date="2004" name="Nat. Genet.">
        <title>Complete sequencing and characterization of 21,243 full-length human cDNAs.</title>
        <authorList>
            <person name="Ota T."/>
            <person name="Suzuki Y."/>
            <person name="Nishikawa T."/>
            <person name="Otsuki T."/>
            <person name="Sugiyama T."/>
            <person name="Irie R."/>
            <person name="Wakamatsu A."/>
            <person name="Hayashi K."/>
            <person name="Sato H."/>
            <person name="Nagai K."/>
            <person name="Kimura K."/>
            <person name="Makita H."/>
            <person name="Sekine M."/>
            <person name="Obayashi M."/>
            <person name="Nishi T."/>
            <person name="Shibahara T."/>
            <person name="Tanaka T."/>
            <person name="Ishii S."/>
            <person name="Yamamoto J."/>
            <person name="Saito K."/>
            <person name="Kawai Y."/>
            <person name="Isono Y."/>
            <person name="Nakamura Y."/>
            <person name="Nagahari K."/>
            <person name="Murakami K."/>
            <person name="Yasuda T."/>
            <person name="Iwayanagi T."/>
            <person name="Wagatsuma M."/>
            <person name="Shiratori A."/>
            <person name="Sudo H."/>
            <person name="Hosoiri T."/>
            <person name="Kaku Y."/>
            <person name="Kodaira H."/>
            <person name="Kondo H."/>
            <person name="Sugawara M."/>
            <person name="Takahashi M."/>
            <person name="Kanda K."/>
            <person name="Yokoi T."/>
            <person name="Furuya T."/>
            <person name="Kikkawa E."/>
            <person name="Omura Y."/>
            <person name="Abe K."/>
            <person name="Kamihara K."/>
            <person name="Katsuta N."/>
            <person name="Sato K."/>
            <person name="Tanikawa M."/>
            <person name="Yamazaki M."/>
            <person name="Ninomiya K."/>
            <person name="Ishibashi T."/>
            <person name="Yamashita H."/>
            <person name="Murakawa K."/>
            <person name="Fujimori K."/>
            <person name="Tanai H."/>
            <person name="Kimata M."/>
            <person name="Watanabe M."/>
            <person name="Hiraoka S."/>
            <person name="Chiba Y."/>
            <person name="Ishida S."/>
            <person name="Ono Y."/>
            <person name="Takiguchi S."/>
            <person name="Watanabe S."/>
            <person name="Yosida M."/>
            <person name="Hotuta T."/>
            <person name="Kusano J."/>
            <person name="Kanehori K."/>
            <person name="Takahashi-Fujii A."/>
            <person name="Hara H."/>
            <person name="Tanase T.-O."/>
            <person name="Nomura Y."/>
            <person name="Togiya S."/>
            <person name="Komai F."/>
            <person name="Hara R."/>
            <person name="Takeuchi K."/>
            <person name="Arita M."/>
            <person name="Imose N."/>
            <person name="Musashino K."/>
            <person name="Yuuki H."/>
            <person name="Oshima A."/>
            <person name="Sasaki N."/>
            <person name="Aotsuka S."/>
            <person name="Yoshikawa Y."/>
            <person name="Matsunawa H."/>
            <person name="Ichihara T."/>
            <person name="Shiohata N."/>
            <person name="Sano S."/>
            <person name="Moriya S."/>
            <person name="Momiyama H."/>
            <person name="Satoh N."/>
            <person name="Takami S."/>
            <person name="Terashima Y."/>
            <person name="Suzuki O."/>
            <person name="Nakagawa S."/>
            <person name="Senoh A."/>
            <person name="Mizoguchi H."/>
            <person name="Goto Y."/>
            <person name="Shimizu F."/>
            <person name="Wakebe H."/>
            <person name="Hishigaki H."/>
            <person name="Watanabe T."/>
            <person name="Sugiyama A."/>
            <person name="Takemoto M."/>
            <person name="Kawakami B."/>
            <person name="Yamazaki M."/>
            <person name="Watanabe K."/>
            <person name="Kumagai A."/>
            <person name="Itakura S."/>
            <person name="Fukuzumi Y."/>
            <person name="Fujimori Y."/>
            <person name="Komiyama M."/>
            <person name="Tashiro H."/>
            <person name="Tanigami A."/>
            <person name="Fujiwara T."/>
            <person name="Ono T."/>
            <person name="Yamada K."/>
            <person name="Fujii Y."/>
            <person name="Ozaki K."/>
            <person name="Hirao M."/>
            <person name="Ohmori Y."/>
            <person name="Kawabata A."/>
            <person name="Hikiji T."/>
            <person name="Kobatake N."/>
            <person name="Inagaki H."/>
            <person name="Ikema Y."/>
            <person name="Okamoto S."/>
            <person name="Okitani R."/>
            <person name="Kawakami T."/>
            <person name="Noguchi S."/>
            <person name="Itoh T."/>
            <person name="Shigeta K."/>
            <person name="Senba T."/>
            <person name="Matsumura K."/>
            <person name="Nakajima Y."/>
            <person name="Mizuno T."/>
            <person name="Morinaga M."/>
            <person name="Sasaki M."/>
            <person name="Togashi T."/>
            <person name="Oyama M."/>
            <person name="Hata H."/>
            <person name="Watanabe M."/>
            <person name="Komatsu T."/>
            <person name="Mizushima-Sugano J."/>
            <person name="Satoh T."/>
            <person name="Shirai Y."/>
            <person name="Takahashi Y."/>
            <person name="Nakagawa K."/>
            <person name="Okumura K."/>
            <person name="Nagase T."/>
            <person name="Nomura N."/>
            <person name="Kikuchi H."/>
            <person name="Masuho Y."/>
            <person name="Yamashita R."/>
            <person name="Nakai K."/>
            <person name="Yada T."/>
            <person name="Nakamura Y."/>
            <person name="Ohara O."/>
            <person name="Isogai T."/>
            <person name="Sugano S."/>
        </authorList>
    </citation>
    <scope>NUCLEOTIDE SEQUENCE [LARGE SCALE MRNA] (ISOFORM 1)</scope>
</reference>
<reference key="6">
    <citation type="submission" date="2005-07" db="EMBL/GenBank/DDBJ databases">
        <authorList>
            <person name="Mural R.J."/>
            <person name="Istrail S."/>
            <person name="Sutton G.G."/>
            <person name="Florea L."/>
            <person name="Halpern A.L."/>
            <person name="Mobarry C.M."/>
            <person name="Lippert R."/>
            <person name="Walenz B."/>
            <person name="Shatkay H."/>
            <person name="Dew I."/>
            <person name="Miller J.R."/>
            <person name="Flanigan M.J."/>
            <person name="Edwards N.J."/>
            <person name="Bolanos R."/>
            <person name="Fasulo D."/>
            <person name="Halldorsson B.V."/>
            <person name="Hannenhalli S."/>
            <person name="Turner R."/>
            <person name="Yooseph S."/>
            <person name="Lu F."/>
            <person name="Nusskern D.R."/>
            <person name="Shue B.C."/>
            <person name="Zheng X.H."/>
            <person name="Zhong F."/>
            <person name="Delcher A.L."/>
            <person name="Huson D.H."/>
            <person name="Kravitz S.A."/>
            <person name="Mouchard L."/>
            <person name="Reinert K."/>
            <person name="Remington K.A."/>
            <person name="Clark A.G."/>
            <person name="Waterman M.S."/>
            <person name="Eichler E.E."/>
            <person name="Adams M.D."/>
            <person name="Hunkapiller M.W."/>
            <person name="Myers E.W."/>
            <person name="Venter J.C."/>
        </authorList>
    </citation>
    <scope>NUCLEOTIDE SEQUENCE [LARGE SCALE GENOMIC DNA]</scope>
</reference>
<reference key="7">
    <citation type="journal article" date="2004" name="Genome Res.">
        <title>The status, quality, and expansion of the NIH full-length cDNA project: the Mammalian Gene Collection (MGC).</title>
        <authorList>
            <consortium name="The MGC Project Team"/>
        </authorList>
    </citation>
    <scope>NUCLEOTIDE SEQUENCE [LARGE SCALE MRNA] (ISOFORMS 1 AND 2)</scope>
    <source>
        <tissue>Eye</tissue>
        <tissue>Skin</tissue>
    </source>
</reference>
<reference key="8">
    <citation type="journal article" date="2015" name="Proteomics">
        <title>N-terminome analysis of the human mitochondrial proteome.</title>
        <authorList>
            <person name="Vaca Jacome A.S."/>
            <person name="Rabilloud T."/>
            <person name="Schaeffer-Reiss C."/>
            <person name="Rompais M."/>
            <person name="Ayoub D."/>
            <person name="Lane L."/>
            <person name="Bairoch A."/>
            <person name="Van Dorsselaer A."/>
            <person name="Carapito C."/>
        </authorList>
    </citation>
    <scope>IDENTIFICATION BY MASS SPECTROMETRY [LARGE SCALE ANALYSIS]</scope>
</reference>
<gene>
    <name type="primary">CNPY2</name>
    <name type="synonym">MSAP</name>
    <name type="synonym">TMEM4</name>
    <name type="synonym">ZSIG9</name>
    <name type="ORF">UNQ1943/PRO4426</name>
</gene>
<sequence>MKGWGWLALLLGALLGTAWARRSQDLHCGACRALVDELEWEIAQVDPKKTIQMGSFRINPDGSQSVVEVPYARSEAHLTELLEEICDRMKEYGEQIDPSTHRKNYVRVVGRNGESSELDLQGIRIDSDISGTLKFACESIVEEYEDELIEFFSREADNVKDKLCSKRTDLCDHALHISHDEL</sequence>
<comment type="function">
    <text>Positive regulator of neurite outgrowth by stabilizing myosin regulatory light chain (MRLC). It prevents MIR-mediated MRLC ubiquitination and its subsequent proteasomal degradation.</text>
</comment>
<comment type="subunit">
    <text evidence="5">Interacts with MYLIP/MIR.</text>
</comment>
<comment type="interaction">
    <interactant intactId="EBI-1054195">
        <id>Q9Y2B0</id>
    </interactant>
    <interactant intactId="EBI-12015266">
        <id>P18825</id>
        <label>ADRA2C</label>
    </interactant>
    <organismsDiffer>false</organismsDiffer>
    <experiments>3</experiments>
</comment>
<comment type="interaction">
    <interactant intactId="EBI-1054195">
        <id>Q9Y2B0</id>
    </interactant>
    <interactant intactId="EBI-6952711">
        <id>Q8WY64</id>
        <label>MYLIP</label>
    </interactant>
    <organismsDiffer>false</organismsDiffer>
    <experiments>3</experiments>
</comment>
<comment type="subcellular location">
    <subcellularLocation>
        <location evidence="4">Endoplasmic reticulum</location>
    </subcellularLocation>
</comment>
<comment type="alternative products">
    <event type="alternative splicing"/>
    <isoform>
        <id>Q9Y2B0-1</id>
        <name>1</name>
        <sequence type="displayed"/>
    </isoform>
    <isoform>
        <id>Q9Y2B0-2</id>
        <name>2</name>
        <sequence type="described" ref="VSP_010884 VSP_010885"/>
    </isoform>
</comment>
<comment type="tissue specificity">
    <text evidence="5">Expressed in different tissues. Highest levels are detected in adult placenta, liver and pancreas.</text>
</comment>
<comment type="similarity">
    <text evidence="8">Belongs to the canopy family.</text>
</comment>
<name>CNPY2_HUMAN</name>
<organism>
    <name type="scientific">Homo sapiens</name>
    <name type="common">Human</name>
    <dbReference type="NCBI Taxonomy" id="9606"/>
    <lineage>
        <taxon>Eukaryota</taxon>
        <taxon>Metazoa</taxon>
        <taxon>Chordata</taxon>
        <taxon>Craniata</taxon>
        <taxon>Vertebrata</taxon>
        <taxon>Euteleostomi</taxon>
        <taxon>Mammalia</taxon>
        <taxon>Eutheria</taxon>
        <taxon>Euarchontoglires</taxon>
        <taxon>Primates</taxon>
        <taxon>Haplorrhini</taxon>
        <taxon>Catarrhini</taxon>
        <taxon>Hominidae</taxon>
        <taxon>Homo</taxon>
    </lineage>
</organism>
<keyword id="KW-0025">Alternative splicing</keyword>
<keyword id="KW-1015">Disulfide bond</keyword>
<keyword id="KW-0256">Endoplasmic reticulum</keyword>
<keyword id="KW-0597">Phosphoprotein</keyword>
<keyword id="KW-1267">Proteomics identification</keyword>
<keyword id="KW-1185">Reference proteome</keyword>
<keyword id="KW-0732">Signal</keyword>
<dbReference type="EMBL" id="AB015631">
    <property type="protein sequence ID" value="BAA76498.1"/>
    <property type="molecule type" value="mRNA"/>
</dbReference>
<dbReference type="EMBL" id="AY032624">
    <property type="protein sequence ID" value="AAK38148.1"/>
    <property type="molecule type" value="mRNA"/>
</dbReference>
<dbReference type="EMBL" id="AF186113">
    <property type="protein sequence ID" value="AAF01431.1"/>
    <property type="molecule type" value="mRNA"/>
</dbReference>
<dbReference type="EMBL" id="AY359102">
    <property type="protein sequence ID" value="AAQ89460.1"/>
    <property type="molecule type" value="mRNA"/>
</dbReference>
<dbReference type="EMBL" id="AK312921">
    <property type="protein sequence ID" value="BAG35766.1"/>
    <property type="molecule type" value="mRNA"/>
</dbReference>
<dbReference type="EMBL" id="CH471054">
    <property type="protein sequence ID" value="EAW96926.1"/>
    <property type="molecule type" value="Genomic_DNA"/>
</dbReference>
<dbReference type="EMBL" id="BC001027">
    <property type="protein sequence ID" value="AAH01027.1"/>
    <property type="molecule type" value="mRNA"/>
</dbReference>
<dbReference type="EMBL" id="BC065015">
    <property type="protein sequence ID" value="AAH65015.1"/>
    <property type="molecule type" value="mRNA"/>
</dbReference>
<dbReference type="CCDS" id="CCDS8914.1">
    <molecule id="Q9Y2B0-1"/>
</dbReference>
<dbReference type="RefSeq" id="NP_001177920.1">
    <molecule id="Q9Y2B0-2"/>
    <property type="nucleotide sequence ID" value="NM_001190991.3"/>
</dbReference>
<dbReference type="RefSeq" id="NP_055070.1">
    <molecule id="Q9Y2B0-1"/>
    <property type="nucleotide sequence ID" value="NM_014255.7"/>
</dbReference>
<dbReference type="SMR" id="Q9Y2B0"/>
<dbReference type="BioGRID" id="115613">
    <property type="interactions" value="57"/>
</dbReference>
<dbReference type="DIP" id="DIP-50705N"/>
<dbReference type="FunCoup" id="Q9Y2B0">
    <property type="interactions" value="1525"/>
</dbReference>
<dbReference type="IntAct" id="Q9Y2B0">
    <property type="interactions" value="29"/>
</dbReference>
<dbReference type="MINT" id="Q9Y2B0"/>
<dbReference type="STRING" id="9606.ENSP00000273308"/>
<dbReference type="GlyGen" id="Q9Y2B0">
    <property type="glycosylation" value="1 site, 1 O-linked glycan (1 site)"/>
</dbReference>
<dbReference type="iPTMnet" id="Q9Y2B0"/>
<dbReference type="PhosphoSitePlus" id="Q9Y2B0"/>
<dbReference type="SwissPalm" id="Q9Y2B0"/>
<dbReference type="BioMuta" id="CNPY2"/>
<dbReference type="DMDM" id="50401205"/>
<dbReference type="jPOST" id="Q9Y2B0"/>
<dbReference type="MassIVE" id="Q9Y2B0"/>
<dbReference type="PaxDb" id="9606-ENSP00000273308"/>
<dbReference type="PeptideAtlas" id="Q9Y2B0"/>
<dbReference type="ProteomicsDB" id="85715">
    <molecule id="Q9Y2B0-1"/>
</dbReference>
<dbReference type="ProteomicsDB" id="85716">
    <molecule id="Q9Y2B0-2"/>
</dbReference>
<dbReference type="Pumba" id="Q9Y2B0"/>
<dbReference type="TopDownProteomics" id="Q9Y2B0-1">
    <molecule id="Q9Y2B0-1"/>
</dbReference>
<dbReference type="TopDownProteomics" id="Q9Y2B0-2">
    <molecule id="Q9Y2B0-2"/>
</dbReference>
<dbReference type="Antibodypedia" id="50939">
    <property type="antibodies" value="201 antibodies from 26 providers"/>
</dbReference>
<dbReference type="DNASU" id="10330"/>
<dbReference type="Ensembl" id="ENST00000273308.9">
    <molecule id="Q9Y2B0-1"/>
    <property type="protein sequence ID" value="ENSP00000273308.4"/>
    <property type="gene ID" value="ENSG00000257727.6"/>
</dbReference>
<dbReference type="GeneID" id="10330"/>
<dbReference type="KEGG" id="hsa:10330"/>
<dbReference type="MANE-Select" id="ENST00000273308.9">
    <property type="protein sequence ID" value="ENSP00000273308.4"/>
    <property type="RefSeq nucleotide sequence ID" value="NM_014255.7"/>
    <property type="RefSeq protein sequence ID" value="NP_055070.1"/>
</dbReference>
<dbReference type="UCSC" id="uc001sku.3">
    <molecule id="Q9Y2B0-1"/>
    <property type="organism name" value="human"/>
</dbReference>
<dbReference type="AGR" id="HGNC:13529"/>
<dbReference type="CTD" id="10330"/>
<dbReference type="DisGeNET" id="10330"/>
<dbReference type="GeneCards" id="CNPY2"/>
<dbReference type="HGNC" id="HGNC:13529">
    <property type="gene designation" value="CNPY2"/>
</dbReference>
<dbReference type="HPA" id="ENSG00000257727">
    <property type="expression patterns" value="Low tissue specificity"/>
</dbReference>
<dbReference type="MIM" id="605861">
    <property type="type" value="gene"/>
</dbReference>
<dbReference type="neXtProt" id="NX_Q9Y2B0"/>
<dbReference type="OpenTargets" id="ENSG00000257727"/>
<dbReference type="PharmGKB" id="PA162382584"/>
<dbReference type="VEuPathDB" id="HostDB:ENSG00000257727"/>
<dbReference type="eggNOG" id="KOG3782">
    <property type="taxonomic scope" value="Eukaryota"/>
</dbReference>
<dbReference type="GeneTree" id="ENSGT00940000161158"/>
<dbReference type="HOGENOM" id="CLU_095726_2_1_1"/>
<dbReference type="InParanoid" id="Q9Y2B0"/>
<dbReference type="OMA" id="HLKCLVC"/>
<dbReference type="OrthoDB" id="192915at2759"/>
<dbReference type="PAN-GO" id="Q9Y2B0">
    <property type="GO annotations" value="1 GO annotation based on evolutionary models"/>
</dbReference>
<dbReference type="PhylomeDB" id="Q9Y2B0"/>
<dbReference type="TreeFam" id="TF318578"/>
<dbReference type="PathwayCommons" id="Q9Y2B0"/>
<dbReference type="SignaLink" id="Q9Y2B0"/>
<dbReference type="BioGRID-ORCS" id="10330">
    <property type="hits" value="93 hits in 1157 CRISPR screens"/>
</dbReference>
<dbReference type="ChiTaRS" id="CNPY2">
    <property type="organism name" value="human"/>
</dbReference>
<dbReference type="GenomeRNAi" id="10330"/>
<dbReference type="Pharos" id="Q9Y2B0">
    <property type="development level" value="Tbio"/>
</dbReference>
<dbReference type="PRO" id="PR:Q9Y2B0"/>
<dbReference type="Proteomes" id="UP000005640">
    <property type="component" value="Chromosome 12"/>
</dbReference>
<dbReference type="RNAct" id="Q9Y2B0">
    <property type="molecule type" value="protein"/>
</dbReference>
<dbReference type="Bgee" id="ENSG00000257727">
    <property type="expression patterns" value="Expressed in adenohypophysis and 200 other cell types or tissues"/>
</dbReference>
<dbReference type="ExpressionAtlas" id="Q9Y2B0">
    <property type="expression patterns" value="baseline and differential"/>
</dbReference>
<dbReference type="GO" id="GO:0005783">
    <property type="term" value="C:endoplasmic reticulum"/>
    <property type="evidence" value="ECO:0000318"/>
    <property type="project" value="GO_Central"/>
</dbReference>
<dbReference type="GO" id="GO:0010629">
    <property type="term" value="P:negative regulation of gene expression"/>
    <property type="evidence" value="ECO:0000250"/>
    <property type="project" value="BHF-UCL"/>
</dbReference>
<dbReference type="GO" id="GO:0010988">
    <property type="term" value="P:regulation of low-density lipoprotein particle clearance"/>
    <property type="evidence" value="ECO:0000250"/>
    <property type="project" value="BHF-UCL"/>
</dbReference>
<dbReference type="Gene3D" id="1.10.225.10">
    <property type="entry name" value="Saposin-like"/>
    <property type="match status" value="1"/>
</dbReference>
<dbReference type="InterPro" id="IPR042415">
    <property type="entry name" value="CNPY"/>
</dbReference>
<dbReference type="InterPro" id="IPR021852">
    <property type="entry name" value="DUF3456"/>
</dbReference>
<dbReference type="InterPro" id="IPR008139">
    <property type="entry name" value="SaposinB_dom"/>
</dbReference>
<dbReference type="PANTHER" id="PTHR13341">
    <property type="entry name" value="MIR-INTERACTING SAPOSIN-LIKE PROTEIN"/>
    <property type="match status" value="1"/>
</dbReference>
<dbReference type="PANTHER" id="PTHR13341:SF6">
    <property type="entry name" value="PROTEIN CANOPY HOMOLOG 2"/>
    <property type="match status" value="1"/>
</dbReference>
<dbReference type="Pfam" id="PF11938">
    <property type="entry name" value="DUF3456"/>
    <property type="match status" value="1"/>
</dbReference>
<dbReference type="PROSITE" id="PS00014">
    <property type="entry name" value="ER_TARGET"/>
    <property type="match status" value="1"/>
</dbReference>
<dbReference type="PROSITE" id="PS50015">
    <property type="entry name" value="SAP_B"/>
    <property type="match status" value="1"/>
</dbReference>